<gene>
    <name type="ordered locus">Os10g0158625</name>
    <name type="ordered locus">LOC_Os10g07060</name>
    <name type="ORF">OsJ_30781</name>
    <name type="ORF">OSJNAa0036D19.3</name>
    <name type="ORF">OSJNBa0036D19.9</name>
</gene>
<accession>Q7XGM6</accession>
<accession>A0A0P0XS72</accession>
<accession>Q94GT2</accession>
<protein>
    <recommendedName>
        <fullName>Putative B3 domain-containing protein Os10g0158600</fullName>
    </recommendedName>
</protein>
<reference key="1">
    <citation type="journal article" date="2003" name="Science">
        <title>In-depth view of structure, activity, and evolution of rice chromosome 10.</title>
        <authorList>
            <person name="Yu Y."/>
            <person name="Rambo T."/>
            <person name="Currie J."/>
            <person name="Saski C."/>
            <person name="Kim H.-R."/>
            <person name="Collura K."/>
            <person name="Thompson S."/>
            <person name="Simmons J."/>
            <person name="Yang T.-J."/>
            <person name="Nah G."/>
            <person name="Patel A.J."/>
            <person name="Thurmond S."/>
            <person name="Henry D."/>
            <person name="Oates R."/>
            <person name="Palmer M."/>
            <person name="Pries G."/>
            <person name="Gibson J."/>
            <person name="Anderson H."/>
            <person name="Paradkar M."/>
            <person name="Crane L."/>
            <person name="Dale J."/>
            <person name="Carver M.B."/>
            <person name="Wood T."/>
            <person name="Frisch D."/>
            <person name="Engler F."/>
            <person name="Soderlund C."/>
            <person name="Palmer L.E."/>
            <person name="Teytelman L."/>
            <person name="Nascimento L."/>
            <person name="De la Bastide M."/>
            <person name="Spiegel L."/>
            <person name="Ware D."/>
            <person name="O'Shaughnessy A."/>
            <person name="Dike S."/>
            <person name="Dedhia N."/>
            <person name="Preston R."/>
            <person name="Huang E."/>
            <person name="Ferraro K."/>
            <person name="Kuit K."/>
            <person name="Miller B."/>
            <person name="Zutavern T."/>
            <person name="Katzenberger F."/>
            <person name="Muller S."/>
            <person name="Balija V."/>
            <person name="Martienssen R.A."/>
            <person name="Stein L."/>
            <person name="Minx P."/>
            <person name="Johnson D."/>
            <person name="Cordum H."/>
            <person name="Mardis E."/>
            <person name="Cheng Z."/>
            <person name="Jiang J."/>
            <person name="Wilson R."/>
            <person name="McCombie W.R."/>
            <person name="Wing R.A."/>
            <person name="Yuan Q."/>
            <person name="Ouyang S."/>
            <person name="Liu J."/>
            <person name="Jones K.M."/>
            <person name="Gansberger K."/>
            <person name="Moffat K."/>
            <person name="Hill J."/>
            <person name="Tsitrin T."/>
            <person name="Overton L."/>
            <person name="Bera J."/>
            <person name="Kim M."/>
            <person name="Jin S."/>
            <person name="Tallon L."/>
            <person name="Ciecko A."/>
            <person name="Pai G."/>
            <person name="Van Aken S."/>
            <person name="Utterback T."/>
            <person name="Reidmuller S."/>
            <person name="Bormann J."/>
            <person name="Feldblyum T."/>
            <person name="Hsiao J."/>
            <person name="Zismann V."/>
            <person name="Blunt S."/>
            <person name="de Vazeille A.R."/>
            <person name="Shaffer T."/>
            <person name="Koo H."/>
            <person name="Suh B."/>
            <person name="Yang Q."/>
            <person name="Haas B."/>
            <person name="Peterson J."/>
            <person name="Pertea M."/>
            <person name="Volfovsky N."/>
            <person name="Wortman J."/>
            <person name="White O."/>
            <person name="Salzberg S.L."/>
            <person name="Fraser C.M."/>
            <person name="Buell C.R."/>
            <person name="Messing J."/>
            <person name="Song R."/>
            <person name="Fuks G."/>
            <person name="Llaca V."/>
            <person name="Kovchak S."/>
            <person name="Young S."/>
            <person name="Bowers J.E."/>
            <person name="Paterson A.H."/>
            <person name="Johns M.A."/>
            <person name="Mao L."/>
            <person name="Pan H."/>
            <person name="Dean R.A."/>
        </authorList>
    </citation>
    <scope>NUCLEOTIDE SEQUENCE [LARGE SCALE GENOMIC DNA]</scope>
    <source>
        <strain>cv. Nipponbare</strain>
    </source>
</reference>
<reference key="2">
    <citation type="journal article" date="2005" name="Nature">
        <title>The map-based sequence of the rice genome.</title>
        <authorList>
            <consortium name="International rice genome sequencing project (IRGSP)"/>
        </authorList>
    </citation>
    <scope>NUCLEOTIDE SEQUENCE [LARGE SCALE GENOMIC DNA]</scope>
    <source>
        <strain>cv. Nipponbare</strain>
    </source>
</reference>
<reference key="3">
    <citation type="journal article" date="2013" name="Rice">
        <title>Improvement of the Oryza sativa Nipponbare reference genome using next generation sequence and optical map data.</title>
        <authorList>
            <person name="Kawahara Y."/>
            <person name="de la Bastide M."/>
            <person name="Hamilton J.P."/>
            <person name="Kanamori H."/>
            <person name="McCombie W.R."/>
            <person name="Ouyang S."/>
            <person name="Schwartz D.C."/>
            <person name="Tanaka T."/>
            <person name="Wu J."/>
            <person name="Zhou S."/>
            <person name="Childs K.L."/>
            <person name="Davidson R.M."/>
            <person name="Lin H."/>
            <person name="Quesada-Ocampo L."/>
            <person name="Vaillancourt B."/>
            <person name="Sakai H."/>
            <person name="Lee S.S."/>
            <person name="Kim J."/>
            <person name="Numa H."/>
            <person name="Itoh T."/>
            <person name="Buell C.R."/>
            <person name="Matsumoto T."/>
        </authorList>
    </citation>
    <scope>GENOME REANNOTATION</scope>
    <source>
        <strain>cv. Nipponbare</strain>
    </source>
</reference>
<reference key="4">
    <citation type="journal article" date="2005" name="PLoS Biol.">
        <title>The genomes of Oryza sativa: a history of duplications.</title>
        <authorList>
            <person name="Yu J."/>
            <person name="Wang J."/>
            <person name="Lin W."/>
            <person name="Li S."/>
            <person name="Li H."/>
            <person name="Zhou J."/>
            <person name="Ni P."/>
            <person name="Dong W."/>
            <person name="Hu S."/>
            <person name="Zeng C."/>
            <person name="Zhang J."/>
            <person name="Zhang Y."/>
            <person name="Li R."/>
            <person name="Xu Z."/>
            <person name="Li S."/>
            <person name="Li X."/>
            <person name="Zheng H."/>
            <person name="Cong L."/>
            <person name="Lin L."/>
            <person name="Yin J."/>
            <person name="Geng J."/>
            <person name="Li G."/>
            <person name="Shi J."/>
            <person name="Liu J."/>
            <person name="Lv H."/>
            <person name="Li J."/>
            <person name="Wang J."/>
            <person name="Deng Y."/>
            <person name="Ran L."/>
            <person name="Shi X."/>
            <person name="Wang X."/>
            <person name="Wu Q."/>
            <person name="Li C."/>
            <person name="Ren X."/>
            <person name="Wang J."/>
            <person name="Wang X."/>
            <person name="Li D."/>
            <person name="Liu D."/>
            <person name="Zhang X."/>
            <person name="Ji Z."/>
            <person name="Zhao W."/>
            <person name="Sun Y."/>
            <person name="Zhang Z."/>
            <person name="Bao J."/>
            <person name="Han Y."/>
            <person name="Dong L."/>
            <person name="Ji J."/>
            <person name="Chen P."/>
            <person name="Wu S."/>
            <person name="Liu J."/>
            <person name="Xiao Y."/>
            <person name="Bu D."/>
            <person name="Tan J."/>
            <person name="Yang L."/>
            <person name="Ye C."/>
            <person name="Zhang J."/>
            <person name="Xu J."/>
            <person name="Zhou Y."/>
            <person name="Yu Y."/>
            <person name="Zhang B."/>
            <person name="Zhuang S."/>
            <person name="Wei H."/>
            <person name="Liu B."/>
            <person name="Lei M."/>
            <person name="Yu H."/>
            <person name="Li Y."/>
            <person name="Xu H."/>
            <person name="Wei S."/>
            <person name="He X."/>
            <person name="Fang L."/>
            <person name="Zhang Z."/>
            <person name="Zhang Y."/>
            <person name="Huang X."/>
            <person name="Su Z."/>
            <person name="Tong W."/>
            <person name="Li J."/>
            <person name="Tong Z."/>
            <person name="Li S."/>
            <person name="Ye J."/>
            <person name="Wang L."/>
            <person name="Fang L."/>
            <person name="Lei T."/>
            <person name="Chen C.-S."/>
            <person name="Chen H.-C."/>
            <person name="Xu Z."/>
            <person name="Li H."/>
            <person name="Huang H."/>
            <person name="Zhang F."/>
            <person name="Xu H."/>
            <person name="Li N."/>
            <person name="Zhao C."/>
            <person name="Li S."/>
            <person name="Dong L."/>
            <person name="Huang Y."/>
            <person name="Li L."/>
            <person name="Xi Y."/>
            <person name="Qi Q."/>
            <person name="Li W."/>
            <person name="Zhang B."/>
            <person name="Hu W."/>
            <person name="Zhang Y."/>
            <person name="Tian X."/>
            <person name="Jiao Y."/>
            <person name="Liang X."/>
            <person name="Jin J."/>
            <person name="Gao L."/>
            <person name="Zheng W."/>
            <person name="Hao B."/>
            <person name="Liu S.-M."/>
            <person name="Wang W."/>
            <person name="Yuan L."/>
            <person name="Cao M."/>
            <person name="McDermott J."/>
            <person name="Samudrala R."/>
            <person name="Wang J."/>
            <person name="Wong G.K.-S."/>
            <person name="Yang H."/>
        </authorList>
    </citation>
    <scope>NUCLEOTIDE SEQUENCE [LARGE SCALE GENOMIC DNA]</scope>
    <source>
        <strain>cv. Nipponbare</strain>
    </source>
</reference>
<keyword id="KW-0238">DNA-binding</keyword>
<keyword id="KW-0539">Nucleus</keyword>
<keyword id="KW-1185">Reference proteome</keyword>
<keyword id="KW-0804">Transcription</keyword>
<keyword id="KW-0805">Transcription regulation</keyword>
<proteinExistence type="inferred from homology"/>
<feature type="chain" id="PRO_0000376986" description="Putative B3 domain-containing protein Os10g0158600">
    <location>
        <begin position="1"/>
        <end position="168"/>
    </location>
</feature>
<feature type="DNA-binding region" description="TF-B3" evidence="1">
    <location>
        <begin position="4"/>
        <end position="97"/>
    </location>
</feature>
<feature type="region of interest" description="Disordered" evidence="2">
    <location>
        <begin position="105"/>
        <end position="151"/>
    </location>
</feature>
<feature type="compositionally biased region" description="Polar residues" evidence="2">
    <location>
        <begin position="106"/>
        <end position="138"/>
    </location>
</feature>
<comment type="subcellular location">
    <subcellularLocation>
        <location evidence="1">Nucleus</location>
    </subcellularLocation>
</comment>
<dbReference type="EMBL" id="AC087723">
    <property type="protein sequence ID" value="AAK95681.1"/>
    <property type="molecule type" value="Genomic_DNA"/>
</dbReference>
<dbReference type="EMBL" id="AC116600">
    <property type="protein sequence ID" value="AAN04135.1"/>
    <property type="molecule type" value="Genomic_DNA"/>
</dbReference>
<dbReference type="EMBL" id="DP000086">
    <property type="protein sequence ID" value="AAP52219.1"/>
    <property type="molecule type" value="Genomic_DNA"/>
</dbReference>
<dbReference type="EMBL" id="AP014966">
    <property type="protein sequence ID" value="BAT09964.1"/>
    <property type="molecule type" value="Genomic_DNA"/>
</dbReference>
<dbReference type="EMBL" id="CM000147">
    <property type="protein sequence ID" value="EEE50597.1"/>
    <property type="molecule type" value="Genomic_DNA"/>
</dbReference>
<dbReference type="SMR" id="Q7XGM6"/>
<dbReference type="FunCoup" id="Q7XGM6">
    <property type="interactions" value="33"/>
</dbReference>
<dbReference type="STRING" id="39947.Q7XGM6"/>
<dbReference type="PaxDb" id="39947-Q7XGM6"/>
<dbReference type="EnsemblPlants" id="Os10t0158625-00">
    <property type="protein sequence ID" value="Os10t0158625-00"/>
    <property type="gene ID" value="Os10g0158625"/>
</dbReference>
<dbReference type="Gramene" id="Os10t0158625-00">
    <property type="protein sequence ID" value="Os10t0158625-00"/>
    <property type="gene ID" value="Os10g0158625"/>
</dbReference>
<dbReference type="HOGENOM" id="CLU_1589175_0_0_1"/>
<dbReference type="InParanoid" id="Q7XGM6"/>
<dbReference type="Proteomes" id="UP000000763">
    <property type="component" value="Chromosome 10"/>
</dbReference>
<dbReference type="Proteomes" id="UP000007752">
    <property type="component" value="Chromosome 10"/>
</dbReference>
<dbReference type="Proteomes" id="UP000059680">
    <property type="component" value="Chromosome 10"/>
</dbReference>
<dbReference type="GO" id="GO:0005634">
    <property type="term" value="C:nucleus"/>
    <property type="evidence" value="ECO:0007669"/>
    <property type="project" value="UniProtKB-SubCell"/>
</dbReference>
<dbReference type="GO" id="GO:0003677">
    <property type="term" value="F:DNA binding"/>
    <property type="evidence" value="ECO:0007669"/>
    <property type="project" value="UniProtKB-KW"/>
</dbReference>
<dbReference type="Gene3D" id="2.40.330.10">
    <property type="entry name" value="DNA-binding pseudobarrel domain"/>
    <property type="match status" value="1"/>
</dbReference>
<dbReference type="InterPro" id="IPR003340">
    <property type="entry name" value="B3_DNA-bd"/>
</dbReference>
<dbReference type="InterPro" id="IPR015300">
    <property type="entry name" value="DNA-bd_pseudobarrel_sf"/>
</dbReference>
<dbReference type="Pfam" id="PF02362">
    <property type="entry name" value="B3"/>
    <property type="match status" value="1"/>
</dbReference>
<dbReference type="SUPFAM" id="SSF101936">
    <property type="entry name" value="DNA-binding pseudobarrel domain"/>
    <property type="match status" value="1"/>
</dbReference>
<dbReference type="PROSITE" id="PS50863">
    <property type="entry name" value="B3"/>
    <property type="match status" value="1"/>
</dbReference>
<name>Y1086_ORYSJ</name>
<organism>
    <name type="scientific">Oryza sativa subsp. japonica</name>
    <name type="common">Rice</name>
    <dbReference type="NCBI Taxonomy" id="39947"/>
    <lineage>
        <taxon>Eukaryota</taxon>
        <taxon>Viridiplantae</taxon>
        <taxon>Streptophyta</taxon>
        <taxon>Embryophyta</taxon>
        <taxon>Tracheophyta</taxon>
        <taxon>Spermatophyta</taxon>
        <taxon>Magnoliopsida</taxon>
        <taxon>Liliopsida</taxon>
        <taxon>Poales</taxon>
        <taxon>Poaceae</taxon>
        <taxon>BOP clade</taxon>
        <taxon>Oryzoideae</taxon>
        <taxon>Oryzeae</taxon>
        <taxon>Oryzinae</taxon>
        <taxon>Oryza</taxon>
        <taxon>Oryza sativa</taxon>
    </lineage>
</organism>
<evidence type="ECO:0000255" key="1">
    <source>
        <dbReference type="PROSITE-ProRule" id="PRU00326"/>
    </source>
</evidence>
<evidence type="ECO:0000256" key="2">
    <source>
        <dbReference type="SAM" id="MobiDB-lite"/>
    </source>
</evidence>
<sequence>MSSVVFASARLNATNQSYLPVPITLATAYEMQHGDSLRLKTSHGLKIKIRIKEAASTLYMTTGWKEFAEATGLETGETILFRMSSRSKARVMLLNRQCLIRCPVKTPSTTSSDKNRSLSPSDQLTRASTSAHPSTSKSIPPLRNGTGSTKRSIADTSFCHQLKLTAEN</sequence>